<feature type="chain" id="PRO_1000096842" description="Phosphopantetheine adenylyltransferase">
    <location>
        <begin position="1"/>
        <end position="166"/>
    </location>
</feature>
<feature type="binding site" evidence="1">
    <location>
        <begin position="11"/>
        <end position="12"/>
    </location>
    <ligand>
        <name>ATP</name>
        <dbReference type="ChEBI" id="CHEBI:30616"/>
    </ligand>
</feature>
<feature type="binding site" evidence="1">
    <location>
        <position position="11"/>
    </location>
    <ligand>
        <name>substrate</name>
    </ligand>
</feature>
<feature type="binding site" evidence="1">
    <location>
        <position position="19"/>
    </location>
    <ligand>
        <name>ATP</name>
        <dbReference type="ChEBI" id="CHEBI:30616"/>
    </ligand>
</feature>
<feature type="binding site" evidence="1">
    <location>
        <position position="43"/>
    </location>
    <ligand>
        <name>substrate</name>
    </ligand>
</feature>
<feature type="binding site" evidence="1">
    <location>
        <position position="76"/>
    </location>
    <ligand>
        <name>substrate</name>
    </ligand>
</feature>
<feature type="binding site" evidence="1">
    <location>
        <position position="90"/>
    </location>
    <ligand>
        <name>substrate</name>
    </ligand>
</feature>
<feature type="binding site" evidence="1">
    <location>
        <begin position="91"/>
        <end position="93"/>
    </location>
    <ligand>
        <name>ATP</name>
        <dbReference type="ChEBI" id="CHEBI:30616"/>
    </ligand>
</feature>
<feature type="binding site" evidence="1">
    <location>
        <position position="101"/>
    </location>
    <ligand>
        <name>ATP</name>
        <dbReference type="ChEBI" id="CHEBI:30616"/>
    </ligand>
</feature>
<feature type="binding site" evidence="1">
    <location>
        <begin position="126"/>
        <end position="132"/>
    </location>
    <ligand>
        <name>ATP</name>
        <dbReference type="ChEBI" id="CHEBI:30616"/>
    </ligand>
</feature>
<feature type="site" description="Transition state stabilizer" evidence="1">
    <location>
        <position position="19"/>
    </location>
</feature>
<sequence>MSGKIGLYTGSFDPVTNGHMDMIKRASHLFEHVYVGIFNNPNKQSFFTFELRAQMLREAVCALPNVTVVSAEHGLAVDLARELSVTHLIRGLRNTADFDYEAGLEYFNHRLAPDIETIYLMANHDLQPISSSRIRELIAFRAPITGLVPQAVINQVEKMNENNKKI</sequence>
<comment type="function">
    <text evidence="1">Reversibly transfers an adenylyl group from ATP to 4'-phosphopantetheine, yielding dephospho-CoA (dPCoA) and pyrophosphate.</text>
</comment>
<comment type="catalytic activity">
    <reaction evidence="1">
        <text>(R)-4'-phosphopantetheine + ATP + H(+) = 3'-dephospho-CoA + diphosphate</text>
        <dbReference type="Rhea" id="RHEA:19801"/>
        <dbReference type="ChEBI" id="CHEBI:15378"/>
        <dbReference type="ChEBI" id="CHEBI:30616"/>
        <dbReference type="ChEBI" id="CHEBI:33019"/>
        <dbReference type="ChEBI" id="CHEBI:57328"/>
        <dbReference type="ChEBI" id="CHEBI:61723"/>
        <dbReference type="EC" id="2.7.7.3"/>
    </reaction>
</comment>
<comment type="cofactor">
    <cofactor evidence="1">
        <name>Mg(2+)</name>
        <dbReference type="ChEBI" id="CHEBI:18420"/>
    </cofactor>
</comment>
<comment type="pathway">
    <text evidence="1">Cofactor biosynthesis; coenzyme A biosynthesis; CoA from (R)-pantothenate: step 4/5.</text>
</comment>
<comment type="subunit">
    <text evidence="1">Homohexamer.</text>
</comment>
<comment type="subcellular location">
    <subcellularLocation>
        <location evidence="1">Cytoplasm</location>
    </subcellularLocation>
</comment>
<comment type="similarity">
    <text evidence="1">Belongs to the bacterial CoaD family.</text>
</comment>
<protein>
    <recommendedName>
        <fullName evidence="1">Phosphopantetheine adenylyltransferase</fullName>
        <ecNumber evidence="1">2.7.7.3</ecNumber>
    </recommendedName>
    <alternativeName>
        <fullName evidence="1">Dephospho-CoA pyrophosphorylase</fullName>
    </alternativeName>
    <alternativeName>
        <fullName evidence="1">Pantetheine-phosphate adenylyltransferase</fullName>
        <shortName evidence="1">PPAT</shortName>
    </alternativeName>
</protein>
<dbReference type="EC" id="2.7.7.3" evidence="1"/>
<dbReference type="EMBL" id="CP001129">
    <property type="protein sequence ID" value="ACG61945.1"/>
    <property type="molecule type" value="Genomic_DNA"/>
</dbReference>
<dbReference type="RefSeq" id="WP_012515221.1">
    <property type="nucleotide sequence ID" value="NC_011134.1"/>
</dbReference>
<dbReference type="SMR" id="B4U1S8"/>
<dbReference type="KEGG" id="sez:Sez_0576"/>
<dbReference type="HOGENOM" id="CLU_100149_0_1_9"/>
<dbReference type="UniPathway" id="UPA00241">
    <property type="reaction ID" value="UER00355"/>
</dbReference>
<dbReference type="Proteomes" id="UP000001873">
    <property type="component" value="Chromosome"/>
</dbReference>
<dbReference type="GO" id="GO:0005737">
    <property type="term" value="C:cytoplasm"/>
    <property type="evidence" value="ECO:0007669"/>
    <property type="project" value="UniProtKB-SubCell"/>
</dbReference>
<dbReference type="GO" id="GO:0005524">
    <property type="term" value="F:ATP binding"/>
    <property type="evidence" value="ECO:0007669"/>
    <property type="project" value="UniProtKB-KW"/>
</dbReference>
<dbReference type="GO" id="GO:0004595">
    <property type="term" value="F:pantetheine-phosphate adenylyltransferase activity"/>
    <property type="evidence" value="ECO:0007669"/>
    <property type="project" value="UniProtKB-UniRule"/>
</dbReference>
<dbReference type="GO" id="GO:0015937">
    <property type="term" value="P:coenzyme A biosynthetic process"/>
    <property type="evidence" value="ECO:0007669"/>
    <property type="project" value="UniProtKB-UniRule"/>
</dbReference>
<dbReference type="CDD" id="cd02163">
    <property type="entry name" value="PPAT"/>
    <property type="match status" value="1"/>
</dbReference>
<dbReference type="Gene3D" id="3.40.50.620">
    <property type="entry name" value="HUPs"/>
    <property type="match status" value="1"/>
</dbReference>
<dbReference type="HAMAP" id="MF_00151">
    <property type="entry name" value="PPAT_bact"/>
    <property type="match status" value="1"/>
</dbReference>
<dbReference type="InterPro" id="IPR004821">
    <property type="entry name" value="Cyt_trans-like"/>
</dbReference>
<dbReference type="InterPro" id="IPR001980">
    <property type="entry name" value="PPAT"/>
</dbReference>
<dbReference type="InterPro" id="IPR014729">
    <property type="entry name" value="Rossmann-like_a/b/a_fold"/>
</dbReference>
<dbReference type="NCBIfam" id="TIGR01510">
    <property type="entry name" value="coaD_prev_kdtB"/>
    <property type="match status" value="1"/>
</dbReference>
<dbReference type="NCBIfam" id="TIGR00125">
    <property type="entry name" value="cyt_tran_rel"/>
    <property type="match status" value="1"/>
</dbReference>
<dbReference type="PANTHER" id="PTHR21342">
    <property type="entry name" value="PHOSPHOPANTETHEINE ADENYLYLTRANSFERASE"/>
    <property type="match status" value="1"/>
</dbReference>
<dbReference type="PANTHER" id="PTHR21342:SF1">
    <property type="entry name" value="PHOSPHOPANTETHEINE ADENYLYLTRANSFERASE"/>
    <property type="match status" value="1"/>
</dbReference>
<dbReference type="Pfam" id="PF01467">
    <property type="entry name" value="CTP_transf_like"/>
    <property type="match status" value="1"/>
</dbReference>
<dbReference type="PRINTS" id="PR01020">
    <property type="entry name" value="LPSBIOSNTHSS"/>
</dbReference>
<dbReference type="SUPFAM" id="SSF52374">
    <property type="entry name" value="Nucleotidylyl transferase"/>
    <property type="match status" value="1"/>
</dbReference>
<keyword id="KW-0067">ATP-binding</keyword>
<keyword id="KW-0173">Coenzyme A biosynthesis</keyword>
<keyword id="KW-0963">Cytoplasm</keyword>
<keyword id="KW-0460">Magnesium</keyword>
<keyword id="KW-0547">Nucleotide-binding</keyword>
<keyword id="KW-0548">Nucleotidyltransferase</keyword>
<keyword id="KW-0808">Transferase</keyword>
<reference key="1">
    <citation type="journal article" date="2008" name="PLoS ONE">
        <title>Genome sequence of a lancefield group C Streptococcus zooepidemicus strain causing epidemic nephritis: new information about an old disease.</title>
        <authorList>
            <person name="Beres S.B."/>
            <person name="Sesso R."/>
            <person name="Pinto S.W.L."/>
            <person name="Hoe N.P."/>
            <person name="Porcella S.F."/>
            <person name="Deleo F.R."/>
            <person name="Musser J.M."/>
        </authorList>
    </citation>
    <scope>NUCLEOTIDE SEQUENCE [LARGE SCALE GENOMIC DNA]</scope>
    <source>
        <strain>MGCS10565</strain>
    </source>
</reference>
<organism>
    <name type="scientific">Streptococcus equi subsp. zooepidemicus (strain MGCS10565)</name>
    <dbReference type="NCBI Taxonomy" id="552526"/>
    <lineage>
        <taxon>Bacteria</taxon>
        <taxon>Bacillati</taxon>
        <taxon>Bacillota</taxon>
        <taxon>Bacilli</taxon>
        <taxon>Lactobacillales</taxon>
        <taxon>Streptococcaceae</taxon>
        <taxon>Streptococcus</taxon>
    </lineage>
</organism>
<name>COAD_STREM</name>
<accession>B4U1S8</accession>
<proteinExistence type="inferred from homology"/>
<evidence type="ECO:0000255" key="1">
    <source>
        <dbReference type="HAMAP-Rule" id="MF_00151"/>
    </source>
</evidence>
<gene>
    <name evidence="1" type="primary">coaD</name>
    <name type="ordered locus">Sez_0576</name>
</gene>